<organism>
    <name type="scientific">Histophilus somni (strain 129Pt)</name>
    <name type="common">Haemophilus somnus</name>
    <dbReference type="NCBI Taxonomy" id="205914"/>
    <lineage>
        <taxon>Bacteria</taxon>
        <taxon>Pseudomonadati</taxon>
        <taxon>Pseudomonadota</taxon>
        <taxon>Gammaproteobacteria</taxon>
        <taxon>Pasteurellales</taxon>
        <taxon>Pasteurellaceae</taxon>
        <taxon>Histophilus</taxon>
    </lineage>
</organism>
<protein>
    <recommendedName>
        <fullName evidence="1">Thymidylate synthase</fullName>
        <shortName evidence="1">TS</shortName>
        <shortName evidence="1">TSase</shortName>
        <ecNumber evidence="1">2.1.1.45</ecNumber>
    </recommendedName>
</protein>
<name>TYSY_HISS1</name>
<comment type="function">
    <text evidence="1">Catalyzes the reductive methylation of 2'-deoxyuridine-5'-monophosphate (dUMP) to 2'-deoxythymidine-5'-monophosphate (dTMP) while utilizing 5,10-methylenetetrahydrofolate (mTHF) as the methyl donor and reductant in the reaction, yielding dihydrofolate (DHF) as a by-product. This enzymatic reaction provides an intracellular de novo source of dTMP, an essential precursor for DNA biosynthesis.</text>
</comment>
<comment type="catalytic activity">
    <reaction evidence="1">
        <text>dUMP + (6R)-5,10-methylene-5,6,7,8-tetrahydrofolate = 7,8-dihydrofolate + dTMP</text>
        <dbReference type="Rhea" id="RHEA:12104"/>
        <dbReference type="ChEBI" id="CHEBI:15636"/>
        <dbReference type="ChEBI" id="CHEBI:57451"/>
        <dbReference type="ChEBI" id="CHEBI:63528"/>
        <dbReference type="ChEBI" id="CHEBI:246422"/>
        <dbReference type="EC" id="2.1.1.45"/>
    </reaction>
</comment>
<comment type="pathway">
    <text evidence="1">Pyrimidine metabolism; dTTP biosynthesis.</text>
</comment>
<comment type="subunit">
    <text evidence="1">Homodimer.</text>
</comment>
<comment type="subcellular location">
    <subcellularLocation>
        <location evidence="1">Cytoplasm</location>
    </subcellularLocation>
</comment>
<comment type="similarity">
    <text evidence="1">Belongs to the thymidylate synthase family. Bacterial-type ThyA subfamily.</text>
</comment>
<gene>
    <name evidence="1" type="primary">thyA</name>
    <name type="ordered locus">HS_1619</name>
</gene>
<accession>Q0I563</accession>
<sequence length="283" mass="32779">MRQYLNLCQRIIDQGHWVENERTGKRCLTVINADLTYDVANNQFPLITTRKSYWKAAIAEFLGYIRGYDNAADFRKLGTKTWDANANENQAWLNNPVRKGTDDMGRVYGVQGRRWRKPNGETVDQLRKIVNNLSKGIDDRGEILTFFNPGEIDLGCLRPCMHTHTFSLLGDTLYLTSYQRSCDVPLGLNFNQIQVFTFLALMAQITGKKAGQAYHKIINAHIYEDQFELMRDVQLKREPFPLPRLEINPDIKTLEDLETWVTMDDFKVIGYQCHEAIKYPFSV</sequence>
<reference key="1">
    <citation type="journal article" date="2007" name="J. Bacteriol.">
        <title>Complete genome sequence of Haemophilus somnus (Histophilus somni) strain 129Pt and comparison to Haemophilus ducreyi 35000HP and Haemophilus influenzae Rd.</title>
        <authorList>
            <person name="Challacombe J.F."/>
            <person name="Duncan A.J."/>
            <person name="Brettin T.S."/>
            <person name="Bruce D."/>
            <person name="Chertkov O."/>
            <person name="Detter J.C."/>
            <person name="Han C.S."/>
            <person name="Misra M."/>
            <person name="Richardson P."/>
            <person name="Tapia R."/>
            <person name="Thayer N."/>
            <person name="Xie G."/>
            <person name="Inzana T.J."/>
        </authorList>
    </citation>
    <scope>NUCLEOTIDE SEQUENCE [LARGE SCALE GENOMIC DNA]</scope>
    <source>
        <strain>129Pt</strain>
    </source>
</reference>
<feature type="chain" id="PRO_1000000607" description="Thymidylate synthase">
    <location>
        <begin position="1"/>
        <end position="283"/>
    </location>
</feature>
<feature type="active site" description="Nucleophile" evidence="1">
    <location>
        <position position="160"/>
    </location>
</feature>
<feature type="binding site" evidence="1">
    <location>
        <position position="22"/>
    </location>
    <ligand>
        <name>dUMP</name>
        <dbReference type="ChEBI" id="CHEBI:246422"/>
    </ligand>
</feature>
<feature type="binding site" evidence="1">
    <location>
        <begin position="180"/>
        <end position="183"/>
    </location>
    <ligand>
        <name>dUMP</name>
        <dbReference type="ChEBI" id="CHEBI:246422"/>
    </ligand>
</feature>
<feature type="binding site" evidence="1">
    <location>
        <position position="183"/>
    </location>
    <ligand>
        <name>(6R)-5,10-methylene-5,6,7,8-tetrahydrofolate</name>
        <dbReference type="ChEBI" id="CHEBI:15636"/>
    </ligand>
</feature>
<feature type="binding site" evidence="1">
    <location>
        <position position="191"/>
    </location>
    <ligand>
        <name>dUMP</name>
        <dbReference type="ChEBI" id="CHEBI:246422"/>
    </ligand>
</feature>
<feature type="binding site" evidence="1">
    <location>
        <begin position="221"/>
        <end position="223"/>
    </location>
    <ligand>
        <name>dUMP</name>
        <dbReference type="ChEBI" id="CHEBI:246422"/>
    </ligand>
</feature>
<feature type="binding site" evidence="1">
    <location>
        <position position="282"/>
    </location>
    <ligand>
        <name>(6R)-5,10-methylene-5,6,7,8-tetrahydrofolate</name>
        <dbReference type="ChEBI" id="CHEBI:15636"/>
    </ligand>
</feature>
<evidence type="ECO:0000255" key="1">
    <source>
        <dbReference type="HAMAP-Rule" id="MF_00008"/>
    </source>
</evidence>
<keyword id="KW-0963">Cytoplasm</keyword>
<keyword id="KW-0489">Methyltransferase</keyword>
<keyword id="KW-0545">Nucleotide biosynthesis</keyword>
<keyword id="KW-0808">Transferase</keyword>
<dbReference type="EC" id="2.1.1.45" evidence="1"/>
<dbReference type="EMBL" id="CP000436">
    <property type="protein sequence ID" value="ABI25887.1"/>
    <property type="molecule type" value="Genomic_DNA"/>
</dbReference>
<dbReference type="SMR" id="Q0I563"/>
<dbReference type="KEGG" id="hso:HS_1619"/>
<dbReference type="eggNOG" id="COG0207">
    <property type="taxonomic scope" value="Bacteria"/>
</dbReference>
<dbReference type="HOGENOM" id="CLU_021669_0_0_6"/>
<dbReference type="UniPathway" id="UPA00575"/>
<dbReference type="GO" id="GO:0005829">
    <property type="term" value="C:cytosol"/>
    <property type="evidence" value="ECO:0007669"/>
    <property type="project" value="TreeGrafter"/>
</dbReference>
<dbReference type="GO" id="GO:0004799">
    <property type="term" value="F:thymidylate synthase activity"/>
    <property type="evidence" value="ECO:0007669"/>
    <property type="project" value="UniProtKB-UniRule"/>
</dbReference>
<dbReference type="GO" id="GO:0006231">
    <property type="term" value="P:dTMP biosynthetic process"/>
    <property type="evidence" value="ECO:0007669"/>
    <property type="project" value="UniProtKB-UniRule"/>
</dbReference>
<dbReference type="GO" id="GO:0006235">
    <property type="term" value="P:dTTP biosynthetic process"/>
    <property type="evidence" value="ECO:0007669"/>
    <property type="project" value="UniProtKB-UniRule"/>
</dbReference>
<dbReference type="GO" id="GO:0032259">
    <property type="term" value="P:methylation"/>
    <property type="evidence" value="ECO:0007669"/>
    <property type="project" value="UniProtKB-KW"/>
</dbReference>
<dbReference type="CDD" id="cd00351">
    <property type="entry name" value="TS_Pyrimidine_HMase"/>
    <property type="match status" value="1"/>
</dbReference>
<dbReference type="FunFam" id="3.30.572.10:FF:000003">
    <property type="entry name" value="Thymidylate synthase"/>
    <property type="match status" value="1"/>
</dbReference>
<dbReference type="Gene3D" id="3.30.572.10">
    <property type="entry name" value="Thymidylate synthase/dCMP hydroxymethylase domain"/>
    <property type="match status" value="1"/>
</dbReference>
<dbReference type="HAMAP" id="MF_00008">
    <property type="entry name" value="Thymidy_synth_bact"/>
    <property type="match status" value="1"/>
</dbReference>
<dbReference type="InterPro" id="IPR045097">
    <property type="entry name" value="Thymidate_synth/dCMP_Mease"/>
</dbReference>
<dbReference type="InterPro" id="IPR023451">
    <property type="entry name" value="Thymidate_synth/dCMP_Mease_dom"/>
</dbReference>
<dbReference type="InterPro" id="IPR036926">
    <property type="entry name" value="Thymidate_synth/dCMP_Mease_sf"/>
</dbReference>
<dbReference type="InterPro" id="IPR000398">
    <property type="entry name" value="Thymidylate_synthase"/>
</dbReference>
<dbReference type="InterPro" id="IPR020940">
    <property type="entry name" value="Thymidylate_synthase_AS"/>
</dbReference>
<dbReference type="NCBIfam" id="NF002498">
    <property type="entry name" value="PRK01827.1-4"/>
    <property type="match status" value="1"/>
</dbReference>
<dbReference type="NCBIfam" id="TIGR03284">
    <property type="entry name" value="thym_sym"/>
    <property type="match status" value="1"/>
</dbReference>
<dbReference type="PANTHER" id="PTHR11548:SF9">
    <property type="entry name" value="THYMIDYLATE SYNTHASE"/>
    <property type="match status" value="1"/>
</dbReference>
<dbReference type="PANTHER" id="PTHR11548">
    <property type="entry name" value="THYMIDYLATE SYNTHASE 1"/>
    <property type="match status" value="1"/>
</dbReference>
<dbReference type="Pfam" id="PF00303">
    <property type="entry name" value="Thymidylat_synt"/>
    <property type="match status" value="1"/>
</dbReference>
<dbReference type="PRINTS" id="PR00108">
    <property type="entry name" value="THYMDSNTHASE"/>
</dbReference>
<dbReference type="SUPFAM" id="SSF55831">
    <property type="entry name" value="Thymidylate synthase/dCMP hydroxymethylase"/>
    <property type="match status" value="1"/>
</dbReference>
<dbReference type="PROSITE" id="PS00091">
    <property type="entry name" value="THYMIDYLATE_SYNTHASE"/>
    <property type="match status" value="1"/>
</dbReference>
<proteinExistence type="inferred from homology"/>